<proteinExistence type="inferred from homology"/>
<keyword id="KW-0028">Amino-acid biosynthesis</keyword>
<keyword id="KW-0055">Arginine biosynthesis</keyword>
<keyword id="KW-0963">Cytoplasm</keyword>
<keyword id="KW-0456">Lyase</keyword>
<keyword id="KW-1185">Reference proteome</keyword>
<gene>
    <name evidence="1" type="primary">argH</name>
    <name type="ordered locus">Nmar_0263</name>
</gene>
<name>ARLY_NITMS</name>
<feature type="chain" id="PRO_1000089098" description="Argininosuccinate lyase">
    <location>
        <begin position="1"/>
        <end position="485"/>
    </location>
</feature>
<comment type="catalytic activity">
    <reaction evidence="1">
        <text>2-(N(omega)-L-arginino)succinate = fumarate + L-arginine</text>
        <dbReference type="Rhea" id="RHEA:24020"/>
        <dbReference type="ChEBI" id="CHEBI:29806"/>
        <dbReference type="ChEBI" id="CHEBI:32682"/>
        <dbReference type="ChEBI" id="CHEBI:57472"/>
        <dbReference type="EC" id="4.3.2.1"/>
    </reaction>
</comment>
<comment type="pathway">
    <text evidence="1">Amino-acid biosynthesis; L-arginine biosynthesis; L-arginine from L-ornithine and carbamoyl phosphate: step 3/3.</text>
</comment>
<comment type="subcellular location">
    <subcellularLocation>
        <location evidence="1">Cytoplasm</location>
    </subcellularLocation>
</comment>
<comment type="similarity">
    <text evidence="1">Belongs to the lyase 1 family. Argininosuccinate lyase subfamily.</text>
</comment>
<sequence length="485" mass="53923">MYRSRLGNDLSDITLDYVSSIDDDAAITFYDIVGSQAHVLMLYQQKIITKSDAKKILSSLESLKDETFDSSSGAEDIHELIEALVIKRAGMSSGGKMHTARSRNDQVVLDIRMKIRDDINIICNCLLDTIEALVSVAKNHQKTIMPLYTHLQQAQAGLFSHYLLAHADVLSRDFQRLYGTFERINQSPLGAGPVGGTSISIDRRSTAKMLGFDDVVENSIDATSTRDFVAEYVSMVSILMTNLSKIAEDFVIWSTSEFSFIELSDEFTSPSSVMPQKKNPDILELTRGKTSEVIGNLTAILTTVKGLASGYGRDLQQIKSSIWSTSKISISALLIFKSMLLTLKVNEKQMKKVTESSNLIALDIAEKLVQEGIPFRVTHKIAGSLTQLAHLSKKPISKLTPSDIKKSVADTKVDPKLVLEIISSITVVSSLKERKSYGSSGYDEQKRMISDRLKKINDFRTDLTHRENKINSSLEDLKKQIDEII</sequence>
<protein>
    <recommendedName>
        <fullName evidence="1">Argininosuccinate lyase</fullName>
        <shortName evidence="1">ASAL</shortName>
        <ecNumber evidence="1">4.3.2.1</ecNumber>
    </recommendedName>
    <alternativeName>
        <fullName evidence="1">Arginosuccinase</fullName>
    </alternativeName>
</protein>
<organism>
    <name type="scientific">Nitrosopumilus maritimus (strain SCM1)</name>
    <dbReference type="NCBI Taxonomy" id="436308"/>
    <lineage>
        <taxon>Archaea</taxon>
        <taxon>Nitrososphaerota</taxon>
        <taxon>Nitrososphaeria</taxon>
        <taxon>Nitrosopumilales</taxon>
        <taxon>Nitrosopumilaceae</taxon>
        <taxon>Nitrosopumilus</taxon>
    </lineage>
</organism>
<accession>A9A331</accession>
<dbReference type="EC" id="4.3.2.1" evidence="1"/>
<dbReference type="EMBL" id="CP000866">
    <property type="protein sequence ID" value="ABX12159.1"/>
    <property type="molecule type" value="Genomic_DNA"/>
</dbReference>
<dbReference type="RefSeq" id="WP_012214646.1">
    <property type="nucleotide sequence ID" value="NC_010085.1"/>
</dbReference>
<dbReference type="SMR" id="A9A331"/>
<dbReference type="FunCoup" id="A9A331">
    <property type="interactions" value="184"/>
</dbReference>
<dbReference type="STRING" id="436308.Nmar_0263"/>
<dbReference type="EnsemblBacteria" id="ABX12159">
    <property type="protein sequence ID" value="ABX12159"/>
    <property type="gene ID" value="Nmar_0263"/>
</dbReference>
<dbReference type="GeneID" id="5773991"/>
<dbReference type="KEGG" id="nmr:Nmar_0263"/>
<dbReference type="eggNOG" id="arCOG01748">
    <property type="taxonomic scope" value="Archaea"/>
</dbReference>
<dbReference type="HOGENOM" id="CLU_027272_2_3_2"/>
<dbReference type="InParanoid" id="A9A331"/>
<dbReference type="OrthoDB" id="27337at2157"/>
<dbReference type="PhylomeDB" id="A9A331"/>
<dbReference type="UniPathway" id="UPA00068">
    <property type="reaction ID" value="UER00114"/>
</dbReference>
<dbReference type="Proteomes" id="UP000000792">
    <property type="component" value="Chromosome"/>
</dbReference>
<dbReference type="GO" id="GO:0005829">
    <property type="term" value="C:cytosol"/>
    <property type="evidence" value="ECO:0000318"/>
    <property type="project" value="GO_Central"/>
</dbReference>
<dbReference type="GO" id="GO:0004056">
    <property type="term" value="F:argininosuccinate lyase activity"/>
    <property type="evidence" value="ECO:0000318"/>
    <property type="project" value="GO_Central"/>
</dbReference>
<dbReference type="GO" id="GO:0042450">
    <property type="term" value="P:arginine biosynthetic process via ornithine"/>
    <property type="evidence" value="ECO:0000318"/>
    <property type="project" value="GO_Central"/>
</dbReference>
<dbReference type="GO" id="GO:0006526">
    <property type="term" value="P:L-arginine biosynthetic process"/>
    <property type="evidence" value="ECO:0007669"/>
    <property type="project" value="UniProtKB-UniRule"/>
</dbReference>
<dbReference type="CDD" id="cd01359">
    <property type="entry name" value="Argininosuccinate_lyase"/>
    <property type="match status" value="1"/>
</dbReference>
<dbReference type="FunFam" id="1.10.40.30:FF:000001">
    <property type="entry name" value="Argininosuccinate lyase"/>
    <property type="match status" value="1"/>
</dbReference>
<dbReference type="FunFam" id="1.20.200.10:FF:000015">
    <property type="entry name" value="argininosuccinate lyase isoform X2"/>
    <property type="match status" value="1"/>
</dbReference>
<dbReference type="Gene3D" id="1.10.40.30">
    <property type="entry name" value="Fumarase/aspartase (C-terminal domain)"/>
    <property type="match status" value="1"/>
</dbReference>
<dbReference type="Gene3D" id="1.20.200.10">
    <property type="entry name" value="Fumarase/aspartase (Central domain)"/>
    <property type="match status" value="1"/>
</dbReference>
<dbReference type="Gene3D" id="1.10.275.10">
    <property type="entry name" value="Fumarase/aspartase (N-terminal domain)"/>
    <property type="match status" value="1"/>
</dbReference>
<dbReference type="HAMAP" id="MF_00006">
    <property type="entry name" value="Arg_succ_lyase"/>
    <property type="match status" value="1"/>
</dbReference>
<dbReference type="InterPro" id="IPR029419">
    <property type="entry name" value="Arg_succ_lyase_C"/>
</dbReference>
<dbReference type="InterPro" id="IPR009049">
    <property type="entry name" value="Argininosuccinate_lyase"/>
</dbReference>
<dbReference type="InterPro" id="IPR024083">
    <property type="entry name" value="Fumarase/histidase_N"/>
</dbReference>
<dbReference type="InterPro" id="IPR000362">
    <property type="entry name" value="Fumarate_lyase_fam"/>
</dbReference>
<dbReference type="InterPro" id="IPR022761">
    <property type="entry name" value="Fumarate_lyase_N"/>
</dbReference>
<dbReference type="InterPro" id="IPR008948">
    <property type="entry name" value="L-Aspartase-like"/>
</dbReference>
<dbReference type="NCBIfam" id="TIGR00838">
    <property type="entry name" value="argH"/>
    <property type="match status" value="1"/>
</dbReference>
<dbReference type="PANTHER" id="PTHR43814">
    <property type="entry name" value="ARGININOSUCCINATE LYASE"/>
    <property type="match status" value="1"/>
</dbReference>
<dbReference type="PANTHER" id="PTHR43814:SF1">
    <property type="entry name" value="ARGININOSUCCINATE LYASE"/>
    <property type="match status" value="1"/>
</dbReference>
<dbReference type="Pfam" id="PF14698">
    <property type="entry name" value="ASL_C2"/>
    <property type="match status" value="1"/>
</dbReference>
<dbReference type="Pfam" id="PF00206">
    <property type="entry name" value="Lyase_1"/>
    <property type="match status" value="1"/>
</dbReference>
<dbReference type="PRINTS" id="PR00145">
    <property type="entry name" value="ARGSUCLYASE"/>
</dbReference>
<dbReference type="PRINTS" id="PR00149">
    <property type="entry name" value="FUMRATELYASE"/>
</dbReference>
<dbReference type="SUPFAM" id="SSF48557">
    <property type="entry name" value="L-aspartase-like"/>
    <property type="match status" value="1"/>
</dbReference>
<reference key="1">
    <citation type="journal article" date="2010" name="Proc. Natl. Acad. Sci. U.S.A.">
        <title>Nitrosopumilus maritimus genome reveals unique mechanisms for nitrification and autotrophy in globally distributed marine crenarchaea.</title>
        <authorList>
            <person name="Walker C.B."/>
            <person name="de la Torre J.R."/>
            <person name="Klotz M.G."/>
            <person name="Urakawa H."/>
            <person name="Pinel N."/>
            <person name="Arp D.J."/>
            <person name="Brochier-Armanet C."/>
            <person name="Chain P.S."/>
            <person name="Chan P.P."/>
            <person name="Gollabgir A."/>
            <person name="Hemp J."/>
            <person name="Hugler M."/>
            <person name="Karr E.A."/>
            <person name="Konneke M."/>
            <person name="Shin M."/>
            <person name="Lawton T.J."/>
            <person name="Lowe T."/>
            <person name="Martens-Habbena W."/>
            <person name="Sayavedra-Soto L.A."/>
            <person name="Lang D."/>
            <person name="Sievert S.M."/>
            <person name="Rosenzweig A.C."/>
            <person name="Manning G."/>
            <person name="Stahl D.A."/>
        </authorList>
    </citation>
    <scope>NUCLEOTIDE SEQUENCE [LARGE SCALE GENOMIC DNA]</scope>
    <source>
        <strain>SCM1</strain>
    </source>
</reference>
<evidence type="ECO:0000255" key="1">
    <source>
        <dbReference type="HAMAP-Rule" id="MF_00006"/>
    </source>
</evidence>